<gene>
    <name evidence="1" type="primary">gatA</name>
    <name type="ordered locus">GK0282</name>
</gene>
<name>GATA_GEOKA</name>
<reference key="1">
    <citation type="journal article" date="2004" name="Nucleic Acids Res.">
        <title>Thermoadaptation trait revealed by the genome sequence of thermophilic Geobacillus kaustophilus.</title>
        <authorList>
            <person name="Takami H."/>
            <person name="Takaki Y."/>
            <person name="Chee G.-J."/>
            <person name="Nishi S."/>
            <person name="Shimamura S."/>
            <person name="Suzuki H."/>
            <person name="Matsui S."/>
            <person name="Uchiyama I."/>
        </authorList>
    </citation>
    <scope>NUCLEOTIDE SEQUENCE [LARGE SCALE GENOMIC DNA]</scope>
    <source>
        <strain>HTA426</strain>
    </source>
</reference>
<accession>Q5L3B3</accession>
<feature type="chain" id="PRO_0000241104" description="Glutamyl-tRNA(Gln) amidotransferase subunit A">
    <location>
        <begin position="1"/>
        <end position="485"/>
    </location>
</feature>
<feature type="active site" description="Charge relay system" evidence="1">
    <location>
        <position position="79"/>
    </location>
</feature>
<feature type="active site" description="Charge relay system" evidence="1">
    <location>
        <position position="154"/>
    </location>
</feature>
<feature type="active site" description="Acyl-ester intermediate" evidence="1">
    <location>
        <position position="178"/>
    </location>
</feature>
<keyword id="KW-0067">ATP-binding</keyword>
<keyword id="KW-0436">Ligase</keyword>
<keyword id="KW-0547">Nucleotide-binding</keyword>
<keyword id="KW-0648">Protein biosynthesis</keyword>
<keyword id="KW-1185">Reference proteome</keyword>
<protein>
    <recommendedName>
        <fullName evidence="1">Glutamyl-tRNA(Gln) amidotransferase subunit A</fullName>
        <shortName evidence="1">Glu-ADT subunit A</shortName>
        <ecNumber evidence="1">6.3.5.7</ecNumber>
    </recommendedName>
</protein>
<organism>
    <name type="scientific">Geobacillus kaustophilus (strain HTA426)</name>
    <dbReference type="NCBI Taxonomy" id="235909"/>
    <lineage>
        <taxon>Bacteria</taxon>
        <taxon>Bacillati</taxon>
        <taxon>Bacillota</taxon>
        <taxon>Bacilli</taxon>
        <taxon>Bacillales</taxon>
        <taxon>Anoxybacillaceae</taxon>
        <taxon>Geobacillus</taxon>
        <taxon>Geobacillus thermoleovorans group</taxon>
    </lineage>
</organism>
<proteinExistence type="inferred from homology"/>
<sequence>MSLFDHSVSELHTLLKKKEVSISDLVDESYRRIDEVEEKVQAFLTLNEEQARAKAKELDNQLAKGEETNPLFGLPIGIKDNIVTKGLRTTCASKILYNFDPIYDATVMERLNAAGTITIGKLNMDEFAMGSSTENSGFQLTRNPWDLERVPGGSSGGSAAAVAAGEVPFALGSDTGGSIRQPAAFCGVVGLKPTYGRVSRFGLVAFASSLDQIGPITRTVEDNAYVLQAIAGVDPMDSTSANIPVPNYVEALTGDIKGLKIAVPKEYLGEGVDEGVRQSVLAALAVLEKLGAAWEEVSLPHSKYALATYYLLASSEASANLARFDGVRYGYRTDNAKNLIDMYKLTRSEGFGAEVKRRIMLGTFALSSGYYDAYYKKAQKVRTLIKRDFENVFERYDVIIGPTTPTPAFKIGEKTSDPLTMYMNDILTIPVNLAGVPAISVPCGFVDGLPVGLQIIGKHFDESTVYRVAHAFEQATDYHKQKPVL</sequence>
<comment type="function">
    <text evidence="1">Allows the formation of correctly charged Gln-tRNA(Gln) through the transamidation of misacylated Glu-tRNA(Gln) in organisms which lack glutaminyl-tRNA synthetase. The reaction takes place in the presence of glutamine and ATP through an activated gamma-phospho-Glu-tRNA(Gln).</text>
</comment>
<comment type="catalytic activity">
    <reaction evidence="1">
        <text>L-glutamyl-tRNA(Gln) + L-glutamine + ATP + H2O = L-glutaminyl-tRNA(Gln) + L-glutamate + ADP + phosphate + H(+)</text>
        <dbReference type="Rhea" id="RHEA:17521"/>
        <dbReference type="Rhea" id="RHEA-COMP:9681"/>
        <dbReference type="Rhea" id="RHEA-COMP:9684"/>
        <dbReference type="ChEBI" id="CHEBI:15377"/>
        <dbReference type="ChEBI" id="CHEBI:15378"/>
        <dbReference type="ChEBI" id="CHEBI:29985"/>
        <dbReference type="ChEBI" id="CHEBI:30616"/>
        <dbReference type="ChEBI" id="CHEBI:43474"/>
        <dbReference type="ChEBI" id="CHEBI:58359"/>
        <dbReference type="ChEBI" id="CHEBI:78520"/>
        <dbReference type="ChEBI" id="CHEBI:78521"/>
        <dbReference type="ChEBI" id="CHEBI:456216"/>
        <dbReference type="EC" id="6.3.5.7"/>
    </reaction>
</comment>
<comment type="subunit">
    <text evidence="1">Heterotrimer of A, B and C subunits.</text>
</comment>
<comment type="similarity">
    <text evidence="1">Belongs to the amidase family. GatA subfamily.</text>
</comment>
<evidence type="ECO:0000255" key="1">
    <source>
        <dbReference type="HAMAP-Rule" id="MF_00120"/>
    </source>
</evidence>
<dbReference type="EC" id="6.3.5.7" evidence="1"/>
<dbReference type="EMBL" id="BA000043">
    <property type="protein sequence ID" value="BAD74567.1"/>
    <property type="molecule type" value="Genomic_DNA"/>
</dbReference>
<dbReference type="RefSeq" id="WP_011229791.1">
    <property type="nucleotide sequence ID" value="NC_006510.1"/>
</dbReference>
<dbReference type="SMR" id="Q5L3B3"/>
<dbReference type="STRING" id="235909.GK0282"/>
<dbReference type="GeneID" id="32062283"/>
<dbReference type="KEGG" id="gka:GK0282"/>
<dbReference type="eggNOG" id="COG0154">
    <property type="taxonomic scope" value="Bacteria"/>
</dbReference>
<dbReference type="HOGENOM" id="CLU_009600_0_3_9"/>
<dbReference type="Proteomes" id="UP000001172">
    <property type="component" value="Chromosome"/>
</dbReference>
<dbReference type="GO" id="GO:0030956">
    <property type="term" value="C:glutamyl-tRNA(Gln) amidotransferase complex"/>
    <property type="evidence" value="ECO:0007669"/>
    <property type="project" value="InterPro"/>
</dbReference>
<dbReference type="GO" id="GO:0005524">
    <property type="term" value="F:ATP binding"/>
    <property type="evidence" value="ECO:0007669"/>
    <property type="project" value="UniProtKB-KW"/>
</dbReference>
<dbReference type="GO" id="GO:0050567">
    <property type="term" value="F:glutaminyl-tRNA synthase (glutamine-hydrolyzing) activity"/>
    <property type="evidence" value="ECO:0007669"/>
    <property type="project" value="UniProtKB-UniRule"/>
</dbReference>
<dbReference type="GO" id="GO:0006412">
    <property type="term" value="P:translation"/>
    <property type="evidence" value="ECO:0007669"/>
    <property type="project" value="UniProtKB-UniRule"/>
</dbReference>
<dbReference type="Gene3D" id="3.90.1300.10">
    <property type="entry name" value="Amidase signature (AS) domain"/>
    <property type="match status" value="1"/>
</dbReference>
<dbReference type="HAMAP" id="MF_00120">
    <property type="entry name" value="GatA"/>
    <property type="match status" value="1"/>
</dbReference>
<dbReference type="InterPro" id="IPR000120">
    <property type="entry name" value="Amidase"/>
</dbReference>
<dbReference type="InterPro" id="IPR020556">
    <property type="entry name" value="Amidase_CS"/>
</dbReference>
<dbReference type="InterPro" id="IPR023631">
    <property type="entry name" value="Amidase_dom"/>
</dbReference>
<dbReference type="InterPro" id="IPR036928">
    <property type="entry name" value="AS_sf"/>
</dbReference>
<dbReference type="InterPro" id="IPR004412">
    <property type="entry name" value="GatA"/>
</dbReference>
<dbReference type="NCBIfam" id="TIGR00132">
    <property type="entry name" value="gatA"/>
    <property type="match status" value="1"/>
</dbReference>
<dbReference type="PANTHER" id="PTHR11895:SF151">
    <property type="entry name" value="GLUTAMYL-TRNA(GLN) AMIDOTRANSFERASE SUBUNIT A"/>
    <property type="match status" value="1"/>
</dbReference>
<dbReference type="PANTHER" id="PTHR11895">
    <property type="entry name" value="TRANSAMIDASE"/>
    <property type="match status" value="1"/>
</dbReference>
<dbReference type="Pfam" id="PF01425">
    <property type="entry name" value="Amidase"/>
    <property type="match status" value="1"/>
</dbReference>
<dbReference type="SUPFAM" id="SSF75304">
    <property type="entry name" value="Amidase signature (AS) enzymes"/>
    <property type="match status" value="1"/>
</dbReference>
<dbReference type="PROSITE" id="PS00571">
    <property type="entry name" value="AMIDASES"/>
    <property type="match status" value="1"/>
</dbReference>